<proteinExistence type="inferred from homology"/>
<feature type="chain" id="PRO_0000141315" description="Cobyric acid synthase">
    <location>
        <begin position="1"/>
        <end position="492"/>
    </location>
</feature>
<feature type="domain" description="GATase cobBQ-type" evidence="1">
    <location>
        <begin position="252"/>
        <end position="440"/>
    </location>
</feature>
<feature type="active site" description="Nucleophile" evidence="1">
    <location>
        <position position="333"/>
    </location>
</feature>
<feature type="active site" evidence="1">
    <location>
        <position position="432"/>
    </location>
</feature>
<dbReference type="EMBL" id="CR378678">
    <property type="protein sequence ID" value="CAG22863.1"/>
    <property type="molecule type" value="Genomic_DNA"/>
</dbReference>
<dbReference type="RefSeq" id="WP_011221058.1">
    <property type="nucleotide sequence ID" value="NC_006371.1"/>
</dbReference>
<dbReference type="SMR" id="Q6LIL7"/>
<dbReference type="STRING" id="298386.PBPRB0991"/>
<dbReference type="KEGG" id="ppr:PBPRB0991"/>
<dbReference type="eggNOG" id="COG1492">
    <property type="taxonomic scope" value="Bacteria"/>
</dbReference>
<dbReference type="HOGENOM" id="CLU_019250_2_2_6"/>
<dbReference type="UniPathway" id="UPA00148"/>
<dbReference type="Proteomes" id="UP000000593">
    <property type="component" value="Chromosome 2"/>
</dbReference>
<dbReference type="GO" id="GO:0015420">
    <property type="term" value="F:ABC-type vitamin B12 transporter activity"/>
    <property type="evidence" value="ECO:0007669"/>
    <property type="project" value="UniProtKB-UniRule"/>
</dbReference>
<dbReference type="GO" id="GO:0003824">
    <property type="term" value="F:catalytic activity"/>
    <property type="evidence" value="ECO:0007669"/>
    <property type="project" value="InterPro"/>
</dbReference>
<dbReference type="GO" id="GO:0009236">
    <property type="term" value="P:cobalamin biosynthetic process"/>
    <property type="evidence" value="ECO:0007669"/>
    <property type="project" value="UniProtKB-UniRule"/>
</dbReference>
<dbReference type="CDD" id="cd05389">
    <property type="entry name" value="CobQ_N"/>
    <property type="match status" value="1"/>
</dbReference>
<dbReference type="CDD" id="cd01750">
    <property type="entry name" value="GATase1_CobQ"/>
    <property type="match status" value="1"/>
</dbReference>
<dbReference type="Gene3D" id="3.40.50.880">
    <property type="match status" value="1"/>
</dbReference>
<dbReference type="Gene3D" id="3.40.50.300">
    <property type="entry name" value="P-loop containing nucleotide triphosphate hydrolases"/>
    <property type="match status" value="1"/>
</dbReference>
<dbReference type="HAMAP" id="MF_00028">
    <property type="entry name" value="CobQ"/>
    <property type="match status" value="1"/>
</dbReference>
<dbReference type="InterPro" id="IPR029062">
    <property type="entry name" value="Class_I_gatase-like"/>
</dbReference>
<dbReference type="InterPro" id="IPR002586">
    <property type="entry name" value="CobQ/CobB/MinD/ParA_Nub-bd_dom"/>
</dbReference>
<dbReference type="InterPro" id="IPR033949">
    <property type="entry name" value="CobQ_GATase1"/>
</dbReference>
<dbReference type="InterPro" id="IPR047045">
    <property type="entry name" value="CobQ_N"/>
</dbReference>
<dbReference type="InterPro" id="IPR004459">
    <property type="entry name" value="CobQ_synth"/>
</dbReference>
<dbReference type="InterPro" id="IPR011698">
    <property type="entry name" value="GATase_3"/>
</dbReference>
<dbReference type="InterPro" id="IPR027417">
    <property type="entry name" value="P-loop_NTPase"/>
</dbReference>
<dbReference type="NCBIfam" id="TIGR00313">
    <property type="entry name" value="cobQ"/>
    <property type="match status" value="1"/>
</dbReference>
<dbReference type="NCBIfam" id="NF001989">
    <property type="entry name" value="PRK00784.1"/>
    <property type="match status" value="1"/>
</dbReference>
<dbReference type="PANTHER" id="PTHR21343:SF1">
    <property type="entry name" value="COBYRIC ACID SYNTHASE"/>
    <property type="match status" value="1"/>
</dbReference>
<dbReference type="PANTHER" id="PTHR21343">
    <property type="entry name" value="DETHIOBIOTIN SYNTHETASE"/>
    <property type="match status" value="1"/>
</dbReference>
<dbReference type="Pfam" id="PF01656">
    <property type="entry name" value="CbiA"/>
    <property type="match status" value="1"/>
</dbReference>
<dbReference type="Pfam" id="PF07685">
    <property type="entry name" value="GATase_3"/>
    <property type="match status" value="1"/>
</dbReference>
<dbReference type="SUPFAM" id="SSF52317">
    <property type="entry name" value="Class I glutamine amidotransferase-like"/>
    <property type="match status" value="1"/>
</dbReference>
<dbReference type="SUPFAM" id="SSF52540">
    <property type="entry name" value="P-loop containing nucleoside triphosphate hydrolases"/>
    <property type="match status" value="1"/>
</dbReference>
<dbReference type="PROSITE" id="PS51274">
    <property type="entry name" value="GATASE_COBBQ"/>
    <property type="match status" value="1"/>
</dbReference>
<sequence length="492" mass="53267">MQLTTQALMVQGTTSDAGKSVLVTGLCRVLVRKGIKVAPFKSQNMALNSAVTKDGGEIGRAQAVQAQAACIEPTVHMNPVLLKPNTDVGAQIIVQGKAIADMDAIGYNGYKKVVMGPIMESFGILQDEYQTVIIEGAGSPAEINLRENDVANMGFAEKADVPVIIIADIDRGGVFAHLYGTLALLSESEQARVIGFVINRFRGDIKLLESGLDWLEEKTGKPVLGVLPYLHGLMLEAEDAINVQQVEAADEQLNVVVPVLTRVSNHTDFDPLRMHPQVNLQFVGKGQPIPPTDLIIIPGTKSVRSDLAFLREQGWDKQIERHLRLGGKVMGICGGYQMLGESIADPDGIEGDAGESQGLGYLQTSTILAPEKQLKQTVGTLQLPEQPAVPVRGYEIHAGITSGIQTNAPVQLQDGPDGQLGIDNQVFGTYLHGIFEQTEACNAILSWAGLEATQTPDFDLIREQGIDRVADTLEEYMKLDKLWPEWADKFAK</sequence>
<name>COBQ_PHOPR</name>
<organism>
    <name type="scientific">Photobacterium profundum (strain SS9)</name>
    <dbReference type="NCBI Taxonomy" id="298386"/>
    <lineage>
        <taxon>Bacteria</taxon>
        <taxon>Pseudomonadati</taxon>
        <taxon>Pseudomonadota</taxon>
        <taxon>Gammaproteobacteria</taxon>
        <taxon>Vibrionales</taxon>
        <taxon>Vibrionaceae</taxon>
        <taxon>Photobacterium</taxon>
    </lineage>
</organism>
<gene>
    <name evidence="1" type="primary">cobQ</name>
    <name type="ordered locus">PBPRB0991</name>
</gene>
<protein>
    <recommendedName>
        <fullName evidence="1">Cobyric acid synthase</fullName>
    </recommendedName>
</protein>
<evidence type="ECO:0000255" key="1">
    <source>
        <dbReference type="HAMAP-Rule" id="MF_00028"/>
    </source>
</evidence>
<comment type="function">
    <text evidence="1">Catalyzes amidations at positions B, D, E, and G on adenosylcobyrinic A,C-diamide. NH(2) groups are provided by glutamine, and one molecule of ATP is hydrogenolyzed for each amidation.</text>
</comment>
<comment type="pathway">
    <text evidence="1">Cofactor biosynthesis; adenosylcobalamin biosynthesis.</text>
</comment>
<comment type="similarity">
    <text evidence="1">Belongs to the CobB/CobQ family. CobQ subfamily.</text>
</comment>
<accession>Q6LIL7</accession>
<keyword id="KW-0169">Cobalamin biosynthesis</keyword>
<keyword id="KW-0315">Glutamine amidotransferase</keyword>
<keyword id="KW-1185">Reference proteome</keyword>
<reference key="1">
    <citation type="journal article" date="2005" name="Science">
        <title>Life at depth: Photobacterium profundum genome sequence and expression analysis.</title>
        <authorList>
            <person name="Vezzi A."/>
            <person name="Campanaro S."/>
            <person name="D'Angelo M."/>
            <person name="Simonato F."/>
            <person name="Vitulo N."/>
            <person name="Lauro F.M."/>
            <person name="Cestaro A."/>
            <person name="Malacrida G."/>
            <person name="Simionati B."/>
            <person name="Cannata N."/>
            <person name="Romualdi C."/>
            <person name="Bartlett D.H."/>
            <person name="Valle G."/>
        </authorList>
    </citation>
    <scope>NUCLEOTIDE SEQUENCE [LARGE SCALE GENOMIC DNA]</scope>
    <source>
        <strain>ATCC BAA-1253 / SS9</strain>
    </source>
</reference>